<accession>B0KM87</accession>
<feature type="chain" id="PRO_1000077524" description="4-hydroxy-3-methylbut-2-enyl diphosphate reductase">
    <location>
        <begin position="1"/>
        <end position="315"/>
    </location>
</feature>
<feature type="active site" description="Proton donor" evidence="1">
    <location>
        <position position="126"/>
    </location>
</feature>
<feature type="binding site" evidence="1">
    <location>
        <position position="12"/>
    </location>
    <ligand>
        <name>[4Fe-4S] cluster</name>
        <dbReference type="ChEBI" id="CHEBI:49883"/>
    </ligand>
</feature>
<feature type="binding site" evidence="1">
    <location>
        <position position="41"/>
    </location>
    <ligand>
        <name>(2E)-4-hydroxy-3-methylbut-2-enyl diphosphate</name>
        <dbReference type="ChEBI" id="CHEBI:128753"/>
    </ligand>
</feature>
<feature type="binding site" evidence="1">
    <location>
        <position position="41"/>
    </location>
    <ligand>
        <name>dimethylallyl diphosphate</name>
        <dbReference type="ChEBI" id="CHEBI:57623"/>
    </ligand>
</feature>
<feature type="binding site" evidence="1">
    <location>
        <position position="41"/>
    </location>
    <ligand>
        <name>isopentenyl diphosphate</name>
        <dbReference type="ChEBI" id="CHEBI:128769"/>
    </ligand>
</feature>
<feature type="binding site" evidence="1">
    <location>
        <position position="74"/>
    </location>
    <ligand>
        <name>(2E)-4-hydroxy-3-methylbut-2-enyl diphosphate</name>
        <dbReference type="ChEBI" id="CHEBI:128753"/>
    </ligand>
</feature>
<feature type="binding site" evidence="1">
    <location>
        <position position="74"/>
    </location>
    <ligand>
        <name>dimethylallyl diphosphate</name>
        <dbReference type="ChEBI" id="CHEBI:57623"/>
    </ligand>
</feature>
<feature type="binding site" evidence="1">
    <location>
        <position position="74"/>
    </location>
    <ligand>
        <name>isopentenyl diphosphate</name>
        <dbReference type="ChEBI" id="CHEBI:128769"/>
    </ligand>
</feature>
<feature type="binding site" evidence="1">
    <location>
        <position position="96"/>
    </location>
    <ligand>
        <name>[4Fe-4S] cluster</name>
        <dbReference type="ChEBI" id="CHEBI:49883"/>
    </ligand>
</feature>
<feature type="binding site" evidence="1">
    <location>
        <position position="124"/>
    </location>
    <ligand>
        <name>(2E)-4-hydroxy-3-methylbut-2-enyl diphosphate</name>
        <dbReference type="ChEBI" id="CHEBI:128753"/>
    </ligand>
</feature>
<feature type="binding site" evidence="1">
    <location>
        <position position="124"/>
    </location>
    <ligand>
        <name>dimethylallyl diphosphate</name>
        <dbReference type="ChEBI" id="CHEBI:57623"/>
    </ligand>
</feature>
<feature type="binding site" evidence="1">
    <location>
        <position position="124"/>
    </location>
    <ligand>
        <name>isopentenyl diphosphate</name>
        <dbReference type="ChEBI" id="CHEBI:128769"/>
    </ligand>
</feature>
<feature type="binding site" evidence="1">
    <location>
        <position position="168"/>
    </location>
    <ligand>
        <name>(2E)-4-hydroxy-3-methylbut-2-enyl diphosphate</name>
        <dbReference type="ChEBI" id="CHEBI:128753"/>
    </ligand>
</feature>
<feature type="binding site" evidence="1">
    <location>
        <position position="198"/>
    </location>
    <ligand>
        <name>[4Fe-4S] cluster</name>
        <dbReference type="ChEBI" id="CHEBI:49883"/>
    </ligand>
</feature>
<feature type="binding site" evidence="1">
    <location>
        <position position="226"/>
    </location>
    <ligand>
        <name>(2E)-4-hydroxy-3-methylbut-2-enyl diphosphate</name>
        <dbReference type="ChEBI" id="CHEBI:128753"/>
    </ligand>
</feature>
<feature type="binding site" evidence="1">
    <location>
        <position position="226"/>
    </location>
    <ligand>
        <name>dimethylallyl diphosphate</name>
        <dbReference type="ChEBI" id="CHEBI:57623"/>
    </ligand>
</feature>
<feature type="binding site" evidence="1">
    <location>
        <position position="226"/>
    </location>
    <ligand>
        <name>isopentenyl diphosphate</name>
        <dbReference type="ChEBI" id="CHEBI:128769"/>
    </ligand>
</feature>
<feature type="binding site" evidence="1">
    <location>
        <position position="227"/>
    </location>
    <ligand>
        <name>(2E)-4-hydroxy-3-methylbut-2-enyl diphosphate</name>
        <dbReference type="ChEBI" id="CHEBI:128753"/>
    </ligand>
</feature>
<feature type="binding site" evidence="1">
    <location>
        <position position="227"/>
    </location>
    <ligand>
        <name>dimethylallyl diphosphate</name>
        <dbReference type="ChEBI" id="CHEBI:57623"/>
    </ligand>
</feature>
<feature type="binding site" evidence="1">
    <location>
        <position position="227"/>
    </location>
    <ligand>
        <name>isopentenyl diphosphate</name>
        <dbReference type="ChEBI" id="CHEBI:128769"/>
    </ligand>
</feature>
<feature type="binding site" evidence="1">
    <location>
        <position position="228"/>
    </location>
    <ligand>
        <name>(2E)-4-hydroxy-3-methylbut-2-enyl diphosphate</name>
        <dbReference type="ChEBI" id="CHEBI:128753"/>
    </ligand>
</feature>
<feature type="binding site" evidence="1">
    <location>
        <position position="228"/>
    </location>
    <ligand>
        <name>dimethylallyl diphosphate</name>
        <dbReference type="ChEBI" id="CHEBI:57623"/>
    </ligand>
</feature>
<feature type="binding site" evidence="1">
    <location>
        <position position="228"/>
    </location>
    <ligand>
        <name>isopentenyl diphosphate</name>
        <dbReference type="ChEBI" id="CHEBI:128769"/>
    </ligand>
</feature>
<feature type="binding site" evidence="1">
    <location>
        <position position="270"/>
    </location>
    <ligand>
        <name>(2E)-4-hydroxy-3-methylbut-2-enyl diphosphate</name>
        <dbReference type="ChEBI" id="CHEBI:128753"/>
    </ligand>
</feature>
<feature type="binding site" evidence="1">
    <location>
        <position position="270"/>
    </location>
    <ligand>
        <name>dimethylallyl diphosphate</name>
        <dbReference type="ChEBI" id="CHEBI:57623"/>
    </ligand>
</feature>
<feature type="binding site" evidence="1">
    <location>
        <position position="270"/>
    </location>
    <ligand>
        <name>isopentenyl diphosphate</name>
        <dbReference type="ChEBI" id="CHEBI:128769"/>
    </ligand>
</feature>
<comment type="function">
    <text evidence="1">Catalyzes the conversion of 1-hydroxy-2-methyl-2-(E)-butenyl 4-diphosphate (HMBPP) into a mixture of isopentenyl diphosphate (IPP) and dimethylallyl diphosphate (DMAPP). Acts in the terminal step of the DOXP/MEP pathway for isoprenoid precursor biosynthesis.</text>
</comment>
<comment type="catalytic activity">
    <reaction evidence="1">
        <text>isopentenyl diphosphate + 2 oxidized [2Fe-2S]-[ferredoxin] + H2O = (2E)-4-hydroxy-3-methylbut-2-enyl diphosphate + 2 reduced [2Fe-2S]-[ferredoxin] + 2 H(+)</text>
        <dbReference type="Rhea" id="RHEA:24488"/>
        <dbReference type="Rhea" id="RHEA-COMP:10000"/>
        <dbReference type="Rhea" id="RHEA-COMP:10001"/>
        <dbReference type="ChEBI" id="CHEBI:15377"/>
        <dbReference type="ChEBI" id="CHEBI:15378"/>
        <dbReference type="ChEBI" id="CHEBI:33737"/>
        <dbReference type="ChEBI" id="CHEBI:33738"/>
        <dbReference type="ChEBI" id="CHEBI:128753"/>
        <dbReference type="ChEBI" id="CHEBI:128769"/>
        <dbReference type="EC" id="1.17.7.4"/>
    </reaction>
</comment>
<comment type="catalytic activity">
    <reaction evidence="1">
        <text>dimethylallyl diphosphate + 2 oxidized [2Fe-2S]-[ferredoxin] + H2O = (2E)-4-hydroxy-3-methylbut-2-enyl diphosphate + 2 reduced [2Fe-2S]-[ferredoxin] + 2 H(+)</text>
        <dbReference type="Rhea" id="RHEA:24825"/>
        <dbReference type="Rhea" id="RHEA-COMP:10000"/>
        <dbReference type="Rhea" id="RHEA-COMP:10001"/>
        <dbReference type="ChEBI" id="CHEBI:15377"/>
        <dbReference type="ChEBI" id="CHEBI:15378"/>
        <dbReference type="ChEBI" id="CHEBI:33737"/>
        <dbReference type="ChEBI" id="CHEBI:33738"/>
        <dbReference type="ChEBI" id="CHEBI:57623"/>
        <dbReference type="ChEBI" id="CHEBI:128753"/>
        <dbReference type="EC" id="1.17.7.4"/>
    </reaction>
</comment>
<comment type="cofactor">
    <cofactor evidence="1">
        <name>[4Fe-4S] cluster</name>
        <dbReference type="ChEBI" id="CHEBI:49883"/>
    </cofactor>
    <text evidence="1">Binds 1 [4Fe-4S] cluster per subunit.</text>
</comment>
<comment type="pathway">
    <text evidence="1">Isoprenoid biosynthesis; dimethylallyl diphosphate biosynthesis; dimethylallyl diphosphate from (2E)-4-hydroxy-3-methylbutenyl diphosphate: step 1/1.</text>
</comment>
<comment type="pathway">
    <text evidence="1">Isoprenoid biosynthesis; isopentenyl diphosphate biosynthesis via DXP pathway; isopentenyl diphosphate from 1-deoxy-D-xylulose 5-phosphate: step 6/6.</text>
</comment>
<comment type="similarity">
    <text evidence="1">Belongs to the IspH family.</text>
</comment>
<gene>
    <name evidence="1" type="primary">ispH</name>
    <name type="ordered locus">PputGB1_0652</name>
</gene>
<reference key="1">
    <citation type="submission" date="2008-01" db="EMBL/GenBank/DDBJ databases">
        <title>Complete sequence of Pseudomonas putida GB-1.</title>
        <authorList>
            <consortium name="US DOE Joint Genome Institute"/>
            <person name="Copeland A."/>
            <person name="Lucas S."/>
            <person name="Lapidus A."/>
            <person name="Barry K."/>
            <person name="Glavina del Rio T."/>
            <person name="Dalin E."/>
            <person name="Tice H."/>
            <person name="Pitluck S."/>
            <person name="Bruce D."/>
            <person name="Goodwin L."/>
            <person name="Chertkov O."/>
            <person name="Brettin T."/>
            <person name="Detter J.C."/>
            <person name="Han C."/>
            <person name="Kuske C.R."/>
            <person name="Schmutz J."/>
            <person name="Larimer F."/>
            <person name="Land M."/>
            <person name="Hauser L."/>
            <person name="Kyrpides N."/>
            <person name="Kim E."/>
            <person name="McCarthy J.K."/>
            <person name="Richardson P."/>
        </authorList>
    </citation>
    <scope>NUCLEOTIDE SEQUENCE [LARGE SCALE GENOMIC DNA]</scope>
    <source>
        <strain>GB-1</strain>
    </source>
</reference>
<organism>
    <name type="scientific">Pseudomonas putida (strain GB-1)</name>
    <dbReference type="NCBI Taxonomy" id="76869"/>
    <lineage>
        <taxon>Bacteria</taxon>
        <taxon>Pseudomonadati</taxon>
        <taxon>Pseudomonadota</taxon>
        <taxon>Gammaproteobacteria</taxon>
        <taxon>Pseudomonadales</taxon>
        <taxon>Pseudomonadaceae</taxon>
        <taxon>Pseudomonas</taxon>
    </lineage>
</organism>
<proteinExistence type="inferred from homology"/>
<evidence type="ECO:0000255" key="1">
    <source>
        <dbReference type="HAMAP-Rule" id="MF_00191"/>
    </source>
</evidence>
<keyword id="KW-0004">4Fe-4S</keyword>
<keyword id="KW-0408">Iron</keyword>
<keyword id="KW-0411">Iron-sulfur</keyword>
<keyword id="KW-0414">Isoprene biosynthesis</keyword>
<keyword id="KW-0479">Metal-binding</keyword>
<keyword id="KW-0560">Oxidoreductase</keyword>
<sequence>MQIKLANPRGFCAGVDRAIEIVNRALEVFGPPIYVRHEVVHNKFVVEDLRNRGAIFVEELDQVPDDVIVIFSAHGVSQAVRQEAAGRGLKVFDATCPLVTKVHIEVAKYSRDGRECILIGHEGHPEVEGTMGQYDASNGGAIYLVEDEEDVANLQVRDPDHLAFVTQTTLSMDDTSRVIDALRARFPNIGGPRKDDICYATQNRQDAVKQLAGESDVVLVVGSPNSSNSNRLRELAERMGTPAYLIDGAEDLQRGWFDQAARIGITAGASAPEVLVRGVIEQLKAWGATGAEELDGREENITFSMPKELRVRSLI</sequence>
<name>ISPH_PSEPG</name>
<protein>
    <recommendedName>
        <fullName evidence="1">4-hydroxy-3-methylbut-2-enyl diphosphate reductase</fullName>
        <shortName evidence="1">HMBPP reductase</shortName>
        <ecNumber evidence="1">1.17.7.4</ecNumber>
    </recommendedName>
</protein>
<dbReference type="EC" id="1.17.7.4" evidence="1"/>
<dbReference type="EMBL" id="CP000926">
    <property type="protein sequence ID" value="ABY96563.1"/>
    <property type="molecule type" value="Genomic_DNA"/>
</dbReference>
<dbReference type="RefSeq" id="WP_010951872.1">
    <property type="nucleotide sequence ID" value="NC_010322.1"/>
</dbReference>
<dbReference type="SMR" id="B0KM87"/>
<dbReference type="GeneID" id="83677937"/>
<dbReference type="KEGG" id="ppg:PputGB1_0652"/>
<dbReference type="eggNOG" id="COG0761">
    <property type="taxonomic scope" value="Bacteria"/>
</dbReference>
<dbReference type="HOGENOM" id="CLU_027486_1_1_6"/>
<dbReference type="UniPathway" id="UPA00056">
    <property type="reaction ID" value="UER00097"/>
</dbReference>
<dbReference type="UniPathway" id="UPA00059">
    <property type="reaction ID" value="UER00105"/>
</dbReference>
<dbReference type="Proteomes" id="UP000002157">
    <property type="component" value="Chromosome"/>
</dbReference>
<dbReference type="GO" id="GO:0051539">
    <property type="term" value="F:4 iron, 4 sulfur cluster binding"/>
    <property type="evidence" value="ECO:0007669"/>
    <property type="project" value="UniProtKB-UniRule"/>
</dbReference>
<dbReference type="GO" id="GO:0051745">
    <property type="term" value="F:4-hydroxy-3-methylbut-2-enyl diphosphate reductase activity"/>
    <property type="evidence" value="ECO:0007669"/>
    <property type="project" value="UniProtKB-UniRule"/>
</dbReference>
<dbReference type="GO" id="GO:0046872">
    <property type="term" value="F:metal ion binding"/>
    <property type="evidence" value="ECO:0007669"/>
    <property type="project" value="UniProtKB-KW"/>
</dbReference>
<dbReference type="GO" id="GO:0050992">
    <property type="term" value="P:dimethylallyl diphosphate biosynthetic process"/>
    <property type="evidence" value="ECO:0007669"/>
    <property type="project" value="UniProtKB-UniRule"/>
</dbReference>
<dbReference type="GO" id="GO:0019288">
    <property type="term" value="P:isopentenyl diphosphate biosynthetic process, methylerythritol 4-phosphate pathway"/>
    <property type="evidence" value="ECO:0007669"/>
    <property type="project" value="UniProtKB-UniRule"/>
</dbReference>
<dbReference type="GO" id="GO:0016114">
    <property type="term" value="P:terpenoid biosynthetic process"/>
    <property type="evidence" value="ECO:0007669"/>
    <property type="project" value="UniProtKB-UniRule"/>
</dbReference>
<dbReference type="CDD" id="cd13944">
    <property type="entry name" value="lytB_ispH"/>
    <property type="match status" value="1"/>
</dbReference>
<dbReference type="Gene3D" id="3.40.50.11270">
    <property type="match status" value="1"/>
</dbReference>
<dbReference type="Gene3D" id="3.40.1010.20">
    <property type="entry name" value="4-hydroxy-3-methylbut-2-enyl diphosphate reductase, catalytic domain"/>
    <property type="match status" value="2"/>
</dbReference>
<dbReference type="HAMAP" id="MF_00191">
    <property type="entry name" value="IspH"/>
    <property type="match status" value="1"/>
</dbReference>
<dbReference type="InterPro" id="IPR003451">
    <property type="entry name" value="LytB/IspH"/>
</dbReference>
<dbReference type="NCBIfam" id="TIGR00216">
    <property type="entry name" value="ispH_lytB"/>
    <property type="match status" value="1"/>
</dbReference>
<dbReference type="NCBIfam" id="NF002188">
    <property type="entry name" value="PRK01045.1-2"/>
    <property type="match status" value="1"/>
</dbReference>
<dbReference type="NCBIfam" id="NF002190">
    <property type="entry name" value="PRK01045.1-4"/>
    <property type="match status" value="1"/>
</dbReference>
<dbReference type="PANTHER" id="PTHR30426">
    <property type="entry name" value="4-HYDROXY-3-METHYLBUT-2-ENYL DIPHOSPHATE REDUCTASE"/>
    <property type="match status" value="1"/>
</dbReference>
<dbReference type="PANTHER" id="PTHR30426:SF0">
    <property type="entry name" value="4-HYDROXY-3-METHYLBUT-2-ENYL DIPHOSPHATE REDUCTASE"/>
    <property type="match status" value="1"/>
</dbReference>
<dbReference type="Pfam" id="PF02401">
    <property type="entry name" value="LYTB"/>
    <property type="match status" value="1"/>
</dbReference>